<gene>
    <name evidence="1" type="primary">lptD</name>
    <name type="synonym">imp</name>
    <name type="synonym">ostA</name>
    <name type="ordered locus">BURPS1710b_0871</name>
</gene>
<reference key="1">
    <citation type="journal article" date="2010" name="Genome Biol. Evol.">
        <title>Continuing evolution of Burkholderia mallei through genome reduction and large-scale rearrangements.</title>
        <authorList>
            <person name="Losada L."/>
            <person name="Ronning C.M."/>
            <person name="DeShazer D."/>
            <person name="Woods D."/>
            <person name="Fedorova N."/>
            <person name="Kim H.S."/>
            <person name="Shabalina S.A."/>
            <person name="Pearson T.R."/>
            <person name="Brinkac L."/>
            <person name="Tan P."/>
            <person name="Nandi T."/>
            <person name="Crabtree J."/>
            <person name="Badger J."/>
            <person name="Beckstrom-Sternberg S."/>
            <person name="Saqib M."/>
            <person name="Schutzer S.E."/>
            <person name="Keim P."/>
            <person name="Nierman W.C."/>
        </authorList>
    </citation>
    <scope>NUCLEOTIDE SEQUENCE [LARGE SCALE GENOMIC DNA]</scope>
    <source>
        <strain>1710b</strain>
    </source>
</reference>
<sequence length="787" mass="86453">MPPKTLFPLVPACDAAPRKKRLAVALLAVPGLVPAVSQAQLSGAAAEPQAFGSPWDLRLAPQLDEHPQKQGGKPATFVLADHTNGTAEQDLAAKGAAEIRRGNAAVKADAIHYDQDTDMADAYGKVTVANGGTTFSGPEAHLKVEANQGFMTTPKYRFTATGGTGSAERVQLLDSERSVFTNGTYTGCQCSTNPAWYIKGSEFDFDTGADEGVARNGVLFFQGVPLFGSPWLTFPLSGDRRSGFLPPTFSPFSSTNGFELSLPYYFNIAPNRDLTITPHIISKRGIFTQATFRYLSTNYSGTLTGEYLPDDRVAHRNRYAIFWQHQQNFGNGFGGYVYYNKVSDNLYPEELGSTNQFVNGVQTVYQQEAGLTYNNGPWSVLGRYQHWQTLPPSAAPYGREPQLNVKYTKYNVGGFDFGAEADYSRFRITTADQPEGDRVMFNPYVSYGLYGPGYFFVPKAQLHMASYDLTTTTGGVPGQPKRFTYSIPTLSLDTGLVFDRSVRLFGQDFIQTLEPRLFYVYTPYRNQSNAPLFDTAVSDFGLAEIFTPNTFVGNDRIADANRLTAALTTRFINPTTGDERARFVIAQQYYFTDQRVTLLPTEAPATARHSDLILGASVKLGAGFASETAFQYNVDNNQLVKSSVGFGYSPGERRVINVGYRYTRQNPTLSNEPINQILMSAQWPLTRRLYAVGRLNYDLASSRVVDGLVGFQYDADCWAFGVGVQRYANGLNSSGQQNSSTRVLAQLVLKGLTSIDNGLVTAFRAGVQGYTPLPPAPAPLSRFSNYD</sequence>
<name>LPTD_BURP1</name>
<feature type="signal peptide" evidence="1">
    <location>
        <begin position="1"/>
        <end position="39"/>
    </location>
</feature>
<feature type="chain" id="PRO_0000281594" description="LPS-assembly protein LptD">
    <location>
        <begin position="40"/>
        <end position="787"/>
    </location>
</feature>
<keyword id="KW-0998">Cell outer membrane</keyword>
<keyword id="KW-0472">Membrane</keyword>
<keyword id="KW-0732">Signal</keyword>
<proteinExistence type="inferred from homology"/>
<dbReference type="EMBL" id="CP000124">
    <property type="protein sequence ID" value="ABA49774.1"/>
    <property type="molecule type" value="Genomic_DNA"/>
</dbReference>
<dbReference type="RefSeq" id="WP_004189876.1">
    <property type="nucleotide sequence ID" value="NC_007434.1"/>
</dbReference>
<dbReference type="SMR" id="Q3JVW9"/>
<dbReference type="EnsemblBacteria" id="ABA49774">
    <property type="protein sequence ID" value="ABA49774"/>
    <property type="gene ID" value="BURPS1710b_0871"/>
</dbReference>
<dbReference type="KEGG" id="bpm:BURPS1710b_0871"/>
<dbReference type="HOGENOM" id="CLU_009039_0_0_4"/>
<dbReference type="Proteomes" id="UP000002700">
    <property type="component" value="Chromosome I"/>
</dbReference>
<dbReference type="GO" id="GO:0009279">
    <property type="term" value="C:cell outer membrane"/>
    <property type="evidence" value="ECO:0007669"/>
    <property type="project" value="UniProtKB-SubCell"/>
</dbReference>
<dbReference type="GO" id="GO:1990351">
    <property type="term" value="C:transporter complex"/>
    <property type="evidence" value="ECO:0007669"/>
    <property type="project" value="TreeGrafter"/>
</dbReference>
<dbReference type="GO" id="GO:0043165">
    <property type="term" value="P:Gram-negative-bacterium-type cell outer membrane assembly"/>
    <property type="evidence" value="ECO:0007669"/>
    <property type="project" value="UniProtKB-UniRule"/>
</dbReference>
<dbReference type="GO" id="GO:0015920">
    <property type="term" value="P:lipopolysaccharide transport"/>
    <property type="evidence" value="ECO:0007669"/>
    <property type="project" value="InterPro"/>
</dbReference>
<dbReference type="HAMAP" id="MF_01411">
    <property type="entry name" value="LPS_assembly_LptD"/>
    <property type="match status" value="1"/>
</dbReference>
<dbReference type="InterPro" id="IPR020889">
    <property type="entry name" value="LipoPS_assembly_LptD"/>
</dbReference>
<dbReference type="InterPro" id="IPR050218">
    <property type="entry name" value="LptD"/>
</dbReference>
<dbReference type="InterPro" id="IPR007543">
    <property type="entry name" value="LptD_C"/>
</dbReference>
<dbReference type="PANTHER" id="PTHR30189">
    <property type="entry name" value="LPS-ASSEMBLY PROTEIN"/>
    <property type="match status" value="1"/>
</dbReference>
<dbReference type="PANTHER" id="PTHR30189:SF1">
    <property type="entry name" value="LPS-ASSEMBLY PROTEIN LPTD"/>
    <property type="match status" value="1"/>
</dbReference>
<dbReference type="Pfam" id="PF04453">
    <property type="entry name" value="LptD"/>
    <property type="match status" value="1"/>
</dbReference>
<accession>Q3JVW9</accession>
<protein>
    <recommendedName>
        <fullName evidence="1">LPS-assembly protein LptD</fullName>
    </recommendedName>
</protein>
<organism>
    <name type="scientific">Burkholderia pseudomallei (strain 1710b)</name>
    <dbReference type="NCBI Taxonomy" id="320372"/>
    <lineage>
        <taxon>Bacteria</taxon>
        <taxon>Pseudomonadati</taxon>
        <taxon>Pseudomonadota</taxon>
        <taxon>Betaproteobacteria</taxon>
        <taxon>Burkholderiales</taxon>
        <taxon>Burkholderiaceae</taxon>
        <taxon>Burkholderia</taxon>
        <taxon>pseudomallei group</taxon>
    </lineage>
</organism>
<evidence type="ECO:0000255" key="1">
    <source>
        <dbReference type="HAMAP-Rule" id="MF_01411"/>
    </source>
</evidence>
<comment type="function">
    <text evidence="1">Together with LptE, is involved in the assembly of lipopolysaccharide (LPS) at the surface of the outer membrane.</text>
</comment>
<comment type="subunit">
    <text evidence="1">Component of the lipopolysaccharide transport and assembly complex. Interacts with LptE and LptA.</text>
</comment>
<comment type="subcellular location">
    <subcellularLocation>
        <location evidence="1">Cell outer membrane</location>
    </subcellularLocation>
</comment>
<comment type="similarity">
    <text evidence="1">Belongs to the LptD family.</text>
</comment>